<name>EFG_HERA2</name>
<accession>A9B746</accession>
<keyword id="KW-0963">Cytoplasm</keyword>
<keyword id="KW-0251">Elongation factor</keyword>
<keyword id="KW-0342">GTP-binding</keyword>
<keyword id="KW-0547">Nucleotide-binding</keyword>
<keyword id="KW-0648">Protein biosynthesis</keyword>
<organism>
    <name type="scientific">Herpetosiphon aurantiacus (strain ATCC 23779 / DSM 785 / 114-95)</name>
    <dbReference type="NCBI Taxonomy" id="316274"/>
    <lineage>
        <taxon>Bacteria</taxon>
        <taxon>Bacillati</taxon>
        <taxon>Chloroflexota</taxon>
        <taxon>Chloroflexia</taxon>
        <taxon>Herpetosiphonales</taxon>
        <taxon>Herpetosiphonaceae</taxon>
        <taxon>Herpetosiphon</taxon>
    </lineage>
</organism>
<sequence length="701" mass="77921">MPRSTPLDRVRNIGIIAHIDAGKTTTTERILFYTGRNYKIGEVHEGAATMDWMEQERERGITITAAATTAHWEYAEQRYQINIIDTPGHVDFTAEVERSLRVLDGGVVVFDAVAGVEPQSETVWRQADKYNVPRICFVNKMDRMGANFDRTVQMIVDRLGAKPVPIQLPIGAEDRFQGIIDLMENKAIFYMDDVGKVQEEREIPAELAEKAKAAREYMLEAIAETDDELMMLYLEGEELQVPELRRALRAATIGNKLVPVLCGSALKNKGVQRMLDAVVLLLPSPLEIPVTKAVRPGVDSEAEDAEFIERPADENAPFTGLVFKIMADPFVGKLAYFRVYSGKLETGSYVLNTTKNKRERVGRLLQMHANHREEIKEVYAGDIAAVVGPKDTFTGDTICSPDDPVVLESIKFPEPVISVAIEPKTKADQDKMSIALSRLAEEDPTFRLNTDVETGQTIIRGMGELHLEVIVDRMMREFKVEANVGKPQVAYRESITRSVDIDSKFVRQSGGKGQYGHVKVKFEPSGEGEGYIFVNGIVGGVVPREYVPAVEAGIREAMETGVIAGYPVVDVKATLFDGSYHDVDSSEMAFKIAASMALKDGVRKGGPQILEPIMKIEVIVPEDYMGSVIGDVNSRRGRIEGMEARGNAQVVRGFVPLANMFGYVNDLRSQTQGRATYSMEFHHYEPIPRNLQEELVEKARS</sequence>
<gene>
    <name evidence="1" type="primary">fusA</name>
    <name type="ordered locus">Haur_3277</name>
</gene>
<feature type="chain" id="PRO_1000091722" description="Elongation factor G">
    <location>
        <begin position="1"/>
        <end position="701"/>
    </location>
</feature>
<feature type="domain" description="tr-type G">
    <location>
        <begin position="8"/>
        <end position="286"/>
    </location>
</feature>
<feature type="binding site" evidence="1">
    <location>
        <begin position="17"/>
        <end position="24"/>
    </location>
    <ligand>
        <name>GTP</name>
        <dbReference type="ChEBI" id="CHEBI:37565"/>
    </ligand>
</feature>
<feature type="binding site" evidence="1">
    <location>
        <begin position="85"/>
        <end position="89"/>
    </location>
    <ligand>
        <name>GTP</name>
        <dbReference type="ChEBI" id="CHEBI:37565"/>
    </ligand>
</feature>
<feature type="binding site" evidence="1">
    <location>
        <begin position="139"/>
        <end position="142"/>
    </location>
    <ligand>
        <name>GTP</name>
        <dbReference type="ChEBI" id="CHEBI:37565"/>
    </ligand>
</feature>
<protein>
    <recommendedName>
        <fullName evidence="1">Elongation factor G</fullName>
        <shortName evidence="1">EF-G</shortName>
    </recommendedName>
</protein>
<comment type="function">
    <text evidence="1">Catalyzes the GTP-dependent ribosomal translocation step during translation elongation. During this step, the ribosome changes from the pre-translocational (PRE) to the post-translocational (POST) state as the newly formed A-site-bound peptidyl-tRNA and P-site-bound deacylated tRNA move to the P and E sites, respectively. Catalyzes the coordinated movement of the two tRNA molecules, the mRNA and conformational changes in the ribosome.</text>
</comment>
<comment type="subcellular location">
    <subcellularLocation>
        <location evidence="1">Cytoplasm</location>
    </subcellularLocation>
</comment>
<comment type="similarity">
    <text evidence="1">Belongs to the TRAFAC class translation factor GTPase superfamily. Classic translation factor GTPase family. EF-G/EF-2 subfamily.</text>
</comment>
<dbReference type="EMBL" id="CP000875">
    <property type="protein sequence ID" value="ABX05914.1"/>
    <property type="molecule type" value="Genomic_DNA"/>
</dbReference>
<dbReference type="SMR" id="A9B746"/>
<dbReference type="FunCoup" id="A9B746">
    <property type="interactions" value="550"/>
</dbReference>
<dbReference type="STRING" id="316274.Haur_3277"/>
<dbReference type="KEGG" id="hau:Haur_3277"/>
<dbReference type="eggNOG" id="COG0480">
    <property type="taxonomic scope" value="Bacteria"/>
</dbReference>
<dbReference type="HOGENOM" id="CLU_002794_4_1_0"/>
<dbReference type="InParanoid" id="A9B746"/>
<dbReference type="Proteomes" id="UP000000787">
    <property type="component" value="Chromosome"/>
</dbReference>
<dbReference type="GO" id="GO:0005737">
    <property type="term" value="C:cytoplasm"/>
    <property type="evidence" value="ECO:0007669"/>
    <property type="project" value="UniProtKB-SubCell"/>
</dbReference>
<dbReference type="GO" id="GO:0005525">
    <property type="term" value="F:GTP binding"/>
    <property type="evidence" value="ECO:0007669"/>
    <property type="project" value="UniProtKB-UniRule"/>
</dbReference>
<dbReference type="GO" id="GO:0003924">
    <property type="term" value="F:GTPase activity"/>
    <property type="evidence" value="ECO:0007669"/>
    <property type="project" value="InterPro"/>
</dbReference>
<dbReference type="GO" id="GO:0003746">
    <property type="term" value="F:translation elongation factor activity"/>
    <property type="evidence" value="ECO:0007669"/>
    <property type="project" value="UniProtKB-UniRule"/>
</dbReference>
<dbReference type="GO" id="GO:0032790">
    <property type="term" value="P:ribosome disassembly"/>
    <property type="evidence" value="ECO:0007669"/>
    <property type="project" value="TreeGrafter"/>
</dbReference>
<dbReference type="CDD" id="cd01886">
    <property type="entry name" value="EF-G"/>
    <property type="match status" value="1"/>
</dbReference>
<dbReference type="CDD" id="cd16262">
    <property type="entry name" value="EFG_III"/>
    <property type="match status" value="1"/>
</dbReference>
<dbReference type="CDD" id="cd01434">
    <property type="entry name" value="EFG_mtEFG1_IV"/>
    <property type="match status" value="1"/>
</dbReference>
<dbReference type="CDD" id="cd03713">
    <property type="entry name" value="EFG_mtEFG_C"/>
    <property type="match status" value="1"/>
</dbReference>
<dbReference type="CDD" id="cd04088">
    <property type="entry name" value="EFG_mtEFG_II"/>
    <property type="match status" value="1"/>
</dbReference>
<dbReference type="FunFam" id="2.40.30.10:FF:000006">
    <property type="entry name" value="Elongation factor G"/>
    <property type="match status" value="1"/>
</dbReference>
<dbReference type="FunFam" id="3.30.230.10:FF:000003">
    <property type="entry name" value="Elongation factor G"/>
    <property type="match status" value="1"/>
</dbReference>
<dbReference type="FunFam" id="3.30.70.240:FF:000001">
    <property type="entry name" value="Elongation factor G"/>
    <property type="match status" value="1"/>
</dbReference>
<dbReference type="FunFam" id="3.30.70.870:FF:000001">
    <property type="entry name" value="Elongation factor G"/>
    <property type="match status" value="1"/>
</dbReference>
<dbReference type="FunFam" id="3.40.50.300:FF:000029">
    <property type="entry name" value="Elongation factor G"/>
    <property type="match status" value="1"/>
</dbReference>
<dbReference type="Gene3D" id="3.30.230.10">
    <property type="match status" value="1"/>
</dbReference>
<dbReference type="Gene3D" id="3.30.70.240">
    <property type="match status" value="1"/>
</dbReference>
<dbReference type="Gene3D" id="3.30.70.870">
    <property type="entry name" value="Elongation Factor G (Translational Gtpase), domain 3"/>
    <property type="match status" value="1"/>
</dbReference>
<dbReference type="Gene3D" id="3.40.50.300">
    <property type="entry name" value="P-loop containing nucleotide triphosphate hydrolases"/>
    <property type="match status" value="1"/>
</dbReference>
<dbReference type="Gene3D" id="2.40.30.10">
    <property type="entry name" value="Translation factors"/>
    <property type="match status" value="1"/>
</dbReference>
<dbReference type="HAMAP" id="MF_00054_B">
    <property type="entry name" value="EF_G_EF_2_B"/>
    <property type="match status" value="1"/>
</dbReference>
<dbReference type="InterPro" id="IPR053905">
    <property type="entry name" value="EF-G-like_DII"/>
</dbReference>
<dbReference type="InterPro" id="IPR041095">
    <property type="entry name" value="EFG_II"/>
</dbReference>
<dbReference type="InterPro" id="IPR009022">
    <property type="entry name" value="EFG_III"/>
</dbReference>
<dbReference type="InterPro" id="IPR035647">
    <property type="entry name" value="EFG_III/V"/>
</dbReference>
<dbReference type="InterPro" id="IPR047872">
    <property type="entry name" value="EFG_IV"/>
</dbReference>
<dbReference type="InterPro" id="IPR035649">
    <property type="entry name" value="EFG_V"/>
</dbReference>
<dbReference type="InterPro" id="IPR000640">
    <property type="entry name" value="EFG_V-like"/>
</dbReference>
<dbReference type="InterPro" id="IPR031157">
    <property type="entry name" value="G_TR_CS"/>
</dbReference>
<dbReference type="InterPro" id="IPR027417">
    <property type="entry name" value="P-loop_NTPase"/>
</dbReference>
<dbReference type="InterPro" id="IPR020568">
    <property type="entry name" value="Ribosomal_Su5_D2-typ_SF"/>
</dbReference>
<dbReference type="InterPro" id="IPR014721">
    <property type="entry name" value="Ribsml_uS5_D2-typ_fold_subgr"/>
</dbReference>
<dbReference type="InterPro" id="IPR005225">
    <property type="entry name" value="Small_GTP-bd"/>
</dbReference>
<dbReference type="InterPro" id="IPR000795">
    <property type="entry name" value="T_Tr_GTP-bd_dom"/>
</dbReference>
<dbReference type="InterPro" id="IPR009000">
    <property type="entry name" value="Transl_B-barrel_sf"/>
</dbReference>
<dbReference type="InterPro" id="IPR004540">
    <property type="entry name" value="Transl_elong_EFG/EF2"/>
</dbReference>
<dbReference type="InterPro" id="IPR005517">
    <property type="entry name" value="Transl_elong_EFG/EF2_IV"/>
</dbReference>
<dbReference type="NCBIfam" id="TIGR00484">
    <property type="entry name" value="EF-G"/>
    <property type="match status" value="1"/>
</dbReference>
<dbReference type="NCBIfam" id="NF009379">
    <property type="entry name" value="PRK12740.1-3"/>
    <property type="match status" value="1"/>
</dbReference>
<dbReference type="NCBIfam" id="NF009381">
    <property type="entry name" value="PRK12740.1-5"/>
    <property type="match status" value="1"/>
</dbReference>
<dbReference type="NCBIfam" id="TIGR00231">
    <property type="entry name" value="small_GTP"/>
    <property type="match status" value="1"/>
</dbReference>
<dbReference type="PANTHER" id="PTHR43261:SF1">
    <property type="entry name" value="RIBOSOME-RELEASING FACTOR 2, MITOCHONDRIAL"/>
    <property type="match status" value="1"/>
</dbReference>
<dbReference type="PANTHER" id="PTHR43261">
    <property type="entry name" value="TRANSLATION ELONGATION FACTOR G-RELATED"/>
    <property type="match status" value="1"/>
</dbReference>
<dbReference type="Pfam" id="PF22042">
    <property type="entry name" value="EF-G_D2"/>
    <property type="match status" value="1"/>
</dbReference>
<dbReference type="Pfam" id="PF00679">
    <property type="entry name" value="EFG_C"/>
    <property type="match status" value="1"/>
</dbReference>
<dbReference type="Pfam" id="PF14492">
    <property type="entry name" value="EFG_III"/>
    <property type="match status" value="1"/>
</dbReference>
<dbReference type="Pfam" id="PF03764">
    <property type="entry name" value="EFG_IV"/>
    <property type="match status" value="1"/>
</dbReference>
<dbReference type="Pfam" id="PF00009">
    <property type="entry name" value="GTP_EFTU"/>
    <property type="match status" value="1"/>
</dbReference>
<dbReference type="PRINTS" id="PR00315">
    <property type="entry name" value="ELONGATNFCT"/>
</dbReference>
<dbReference type="SMART" id="SM00838">
    <property type="entry name" value="EFG_C"/>
    <property type="match status" value="1"/>
</dbReference>
<dbReference type="SMART" id="SM00889">
    <property type="entry name" value="EFG_IV"/>
    <property type="match status" value="1"/>
</dbReference>
<dbReference type="SUPFAM" id="SSF54980">
    <property type="entry name" value="EF-G C-terminal domain-like"/>
    <property type="match status" value="2"/>
</dbReference>
<dbReference type="SUPFAM" id="SSF52540">
    <property type="entry name" value="P-loop containing nucleoside triphosphate hydrolases"/>
    <property type="match status" value="1"/>
</dbReference>
<dbReference type="SUPFAM" id="SSF54211">
    <property type="entry name" value="Ribosomal protein S5 domain 2-like"/>
    <property type="match status" value="1"/>
</dbReference>
<dbReference type="SUPFAM" id="SSF50447">
    <property type="entry name" value="Translation proteins"/>
    <property type="match status" value="1"/>
</dbReference>
<dbReference type="PROSITE" id="PS00301">
    <property type="entry name" value="G_TR_1"/>
    <property type="match status" value="1"/>
</dbReference>
<dbReference type="PROSITE" id="PS51722">
    <property type="entry name" value="G_TR_2"/>
    <property type="match status" value="1"/>
</dbReference>
<proteinExistence type="inferred from homology"/>
<evidence type="ECO:0000255" key="1">
    <source>
        <dbReference type="HAMAP-Rule" id="MF_00054"/>
    </source>
</evidence>
<reference key="1">
    <citation type="journal article" date="2011" name="Stand. Genomic Sci.">
        <title>Complete genome sequence of the filamentous gliding predatory bacterium Herpetosiphon aurantiacus type strain (114-95(T)).</title>
        <authorList>
            <person name="Kiss H."/>
            <person name="Nett M."/>
            <person name="Domin N."/>
            <person name="Martin K."/>
            <person name="Maresca J.A."/>
            <person name="Copeland A."/>
            <person name="Lapidus A."/>
            <person name="Lucas S."/>
            <person name="Berry K.W."/>
            <person name="Glavina Del Rio T."/>
            <person name="Dalin E."/>
            <person name="Tice H."/>
            <person name="Pitluck S."/>
            <person name="Richardson P."/>
            <person name="Bruce D."/>
            <person name="Goodwin L."/>
            <person name="Han C."/>
            <person name="Detter J.C."/>
            <person name="Schmutz J."/>
            <person name="Brettin T."/>
            <person name="Land M."/>
            <person name="Hauser L."/>
            <person name="Kyrpides N.C."/>
            <person name="Ivanova N."/>
            <person name="Goeker M."/>
            <person name="Woyke T."/>
            <person name="Klenk H.P."/>
            <person name="Bryant D.A."/>
        </authorList>
    </citation>
    <scope>NUCLEOTIDE SEQUENCE [LARGE SCALE GENOMIC DNA]</scope>
    <source>
        <strain>ATCC 23779 / DSM 785 / 114-95</strain>
    </source>
</reference>